<proteinExistence type="inferred from homology"/>
<gene>
    <name evidence="1" type="primary">hcxB</name>
    <name evidence="3" type="synonym">ybiC</name>
    <name type="ordered locus">Z1022</name>
    <name type="ordered locus">ECs0879</name>
</gene>
<dbReference type="EC" id="1.1.1.-" evidence="1"/>
<dbReference type="EC" id="1.1.1.237" evidence="1"/>
<dbReference type="EMBL" id="AE005174">
    <property type="protein sequence ID" value="AAG55173.1"/>
    <property type="molecule type" value="Genomic_DNA"/>
</dbReference>
<dbReference type="EMBL" id="BA000007">
    <property type="protein sequence ID" value="BAB34302.1"/>
    <property type="molecule type" value="Genomic_DNA"/>
</dbReference>
<dbReference type="PIR" id="A85589">
    <property type="entry name" value="A85589"/>
</dbReference>
<dbReference type="PIR" id="G90738">
    <property type="entry name" value="G90738"/>
</dbReference>
<dbReference type="RefSeq" id="NP_308906.1">
    <property type="nucleotide sequence ID" value="NC_002695.1"/>
</dbReference>
<dbReference type="RefSeq" id="WP_000443495.1">
    <property type="nucleotide sequence ID" value="NZ_VOAI01000006.1"/>
</dbReference>
<dbReference type="SMR" id="P58409"/>
<dbReference type="STRING" id="155864.Z1022"/>
<dbReference type="GeneID" id="917618"/>
<dbReference type="KEGG" id="ece:Z1022"/>
<dbReference type="KEGG" id="ecs:ECs_0879"/>
<dbReference type="PATRIC" id="fig|386585.9.peg.993"/>
<dbReference type="eggNOG" id="COG2055">
    <property type="taxonomic scope" value="Bacteria"/>
</dbReference>
<dbReference type="HOGENOM" id="CLU_040452_1_0_6"/>
<dbReference type="OMA" id="VLAHNCA"/>
<dbReference type="Proteomes" id="UP000000558">
    <property type="component" value="Chromosome"/>
</dbReference>
<dbReference type="Proteomes" id="UP000002519">
    <property type="component" value="Chromosome"/>
</dbReference>
<dbReference type="GO" id="GO:0047029">
    <property type="term" value="F:(R)-4-hydroxyphenyllactate dehydrogenase (NADP+) activity"/>
    <property type="evidence" value="ECO:0007669"/>
    <property type="project" value="RHEA"/>
</dbReference>
<dbReference type="GO" id="GO:0047995">
    <property type="term" value="F:hydroxyphenylpyruvate reductase activity"/>
    <property type="evidence" value="ECO:0007669"/>
    <property type="project" value="UniProtKB-EC"/>
</dbReference>
<dbReference type="Gene3D" id="1.10.1530.10">
    <property type="match status" value="2"/>
</dbReference>
<dbReference type="Gene3D" id="3.30.1370.60">
    <property type="entry name" value="Hypothetical oxidoreductase yiak, domain 2"/>
    <property type="match status" value="1"/>
</dbReference>
<dbReference type="Gene3D" id="1.20.5.460">
    <property type="entry name" value="Single helix bin"/>
    <property type="match status" value="1"/>
</dbReference>
<dbReference type="InterPro" id="IPR043144">
    <property type="entry name" value="Mal/L-sulf/L-lact_DH-like_ah"/>
</dbReference>
<dbReference type="InterPro" id="IPR043143">
    <property type="entry name" value="Mal/L-sulf/L-lact_DH-like_NADP"/>
</dbReference>
<dbReference type="InterPro" id="IPR036111">
    <property type="entry name" value="Mal/L-sulfo/L-lacto_DH-like_sf"/>
</dbReference>
<dbReference type="InterPro" id="IPR003767">
    <property type="entry name" value="Malate/L-lactate_DH-like"/>
</dbReference>
<dbReference type="NCBIfam" id="NF007504">
    <property type="entry name" value="PRK10098.1"/>
    <property type="match status" value="1"/>
</dbReference>
<dbReference type="PANTHER" id="PTHR11091:SF0">
    <property type="entry name" value="MALATE DEHYDROGENASE"/>
    <property type="match status" value="1"/>
</dbReference>
<dbReference type="PANTHER" id="PTHR11091">
    <property type="entry name" value="OXIDOREDUCTASE-RELATED"/>
    <property type="match status" value="1"/>
</dbReference>
<dbReference type="Pfam" id="PF02615">
    <property type="entry name" value="Ldh_2"/>
    <property type="match status" value="1"/>
</dbReference>
<dbReference type="SUPFAM" id="SSF89733">
    <property type="entry name" value="L-sulfolactate dehydrogenase-like"/>
    <property type="match status" value="1"/>
</dbReference>
<sequence>MESGHRFDAQTLHSFIQAVFRQMGSEEQEAKLVADHLIAANLAGHDSHGIGMIPSYVRSWSQGHLQINHHAKIVKEAGAAVTLDGDRAFGQVAAHEAMALGIEKAHQHGIAAVALHNSHHIGRIGYWAEQCAAAGFVSIHFVSVVGIPMVAPFHGRDSRFGTNPFCVVFPRKDDFPLLLDYATSAIAFGKTRVAWHKGVPVPPGCLIDVNGVPTTNPAVMQESPLGSLLTFAEHKGYALAAMCEILGGALSGGKTTHQETLQTSPDAILNCMTTIIINPELFGAPDCSAQTEAFAEWVKASPHDDDKPILLPGEWEVNTRRERQEQGIPLDAGSWQAICDAARQIGMPEETLQAFCQQLAS</sequence>
<feature type="chain" id="PRO_0000083841" description="Hydroxycarboxylate dehydrogenase B">
    <location>
        <begin position="1"/>
        <end position="361"/>
    </location>
</feature>
<feature type="binding site" evidence="1">
    <location>
        <position position="48"/>
    </location>
    <ligand>
        <name>NAD(+)</name>
        <dbReference type="ChEBI" id="CHEBI:57540"/>
    </ligand>
</feature>
<feature type="binding site" evidence="1">
    <location>
        <begin position="122"/>
        <end position="124"/>
    </location>
    <ligand>
        <name>NAD(+)</name>
        <dbReference type="ChEBI" id="CHEBI:57540"/>
    </ligand>
</feature>
<feature type="binding site" evidence="1">
    <location>
        <begin position="178"/>
        <end position="182"/>
    </location>
    <ligand>
        <name>NAD(+)</name>
        <dbReference type="ChEBI" id="CHEBI:57540"/>
    </ligand>
</feature>
<feature type="binding site" evidence="1">
    <location>
        <position position="234"/>
    </location>
    <ligand>
        <name>NAD(+)</name>
        <dbReference type="ChEBI" id="CHEBI:57540"/>
    </ligand>
</feature>
<feature type="binding site" evidence="1">
    <location>
        <position position="270"/>
    </location>
    <ligand>
        <name>NAD(+)</name>
        <dbReference type="ChEBI" id="CHEBI:57540"/>
    </ligand>
</feature>
<feature type="binding site" evidence="1">
    <location>
        <begin position="313"/>
        <end position="316"/>
    </location>
    <ligand>
        <name>NAD(+)</name>
        <dbReference type="ChEBI" id="CHEBI:57540"/>
    </ligand>
</feature>
<reference key="1">
    <citation type="journal article" date="2001" name="Nature">
        <title>Genome sequence of enterohaemorrhagic Escherichia coli O157:H7.</title>
        <authorList>
            <person name="Perna N.T."/>
            <person name="Plunkett G. III"/>
            <person name="Burland V."/>
            <person name="Mau B."/>
            <person name="Glasner J.D."/>
            <person name="Rose D.J."/>
            <person name="Mayhew G.F."/>
            <person name="Evans P.S."/>
            <person name="Gregor J."/>
            <person name="Kirkpatrick H.A."/>
            <person name="Posfai G."/>
            <person name="Hackett J."/>
            <person name="Klink S."/>
            <person name="Boutin A."/>
            <person name="Shao Y."/>
            <person name="Miller L."/>
            <person name="Grotbeck E.J."/>
            <person name="Davis N.W."/>
            <person name="Lim A."/>
            <person name="Dimalanta E.T."/>
            <person name="Potamousis K."/>
            <person name="Apodaca J."/>
            <person name="Anantharaman T.S."/>
            <person name="Lin J."/>
            <person name="Yen G."/>
            <person name="Schwartz D.C."/>
            <person name="Welch R.A."/>
            <person name="Blattner F.R."/>
        </authorList>
    </citation>
    <scope>NUCLEOTIDE SEQUENCE [LARGE SCALE GENOMIC DNA]</scope>
    <source>
        <strain>O157:H7 / EDL933 / ATCC 700927 / EHEC</strain>
    </source>
</reference>
<reference key="2">
    <citation type="journal article" date="2001" name="DNA Res.">
        <title>Complete genome sequence of enterohemorrhagic Escherichia coli O157:H7 and genomic comparison with a laboratory strain K-12.</title>
        <authorList>
            <person name="Hayashi T."/>
            <person name="Makino K."/>
            <person name="Ohnishi M."/>
            <person name="Kurokawa K."/>
            <person name="Ishii K."/>
            <person name="Yokoyama K."/>
            <person name="Han C.-G."/>
            <person name="Ohtsubo E."/>
            <person name="Nakayama K."/>
            <person name="Murata T."/>
            <person name="Tanaka M."/>
            <person name="Tobe T."/>
            <person name="Iida T."/>
            <person name="Takami H."/>
            <person name="Honda T."/>
            <person name="Sasakawa C."/>
            <person name="Ogasawara N."/>
            <person name="Yasunaga T."/>
            <person name="Kuhara S."/>
            <person name="Shiba T."/>
            <person name="Hattori M."/>
            <person name="Shinagawa H."/>
        </authorList>
    </citation>
    <scope>NUCLEOTIDE SEQUENCE [LARGE SCALE GENOMIC DNA]</scope>
    <source>
        <strain>O157:H7 / Sakai / RIMD 0509952 / EHEC</strain>
    </source>
</reference>
<name>HCXB_ECO57</name>
<organism>
    <name type="scientific">Escherichia coli O157:H7</name>
    <dbReference type="NCBI Taxonomy" id="83334"/>
    <lineage>
        <taxon>Bacteria</taxon>
        <taxon>Pseudomonadati</taxon>
        <taxon>Pseudomonadota</taxon>
        <taxon>Gammaproteobacteria</taxon>
        <taxon>Enterobacterales</taxon>
        <taxon>Enterobacteriaceae</taxon>
        <taxon>Escherichia</taxon>
    </lineage>
</organism>
<evidence type="ECO:0000250" key="1">
    <source>
        <dbReference type="UniProtKB" id="P30178"/>
    </source>
</evidence>
<evidence type="ECO:0000305" key="2"/>
<evidence type="ECO:0000312" key="3">
    <source>
        <dbReference type="EMBL" id="AAG55173.1"/>
    </source>
</evidence>
<keyword id="KW-0520">NAD</keyword>
<keyword id="KW-0521">NADP</keyword>
<keyword id="KW-0560">Oxidoreductase</keyword>
<keyword id="KW-1185">Reference proteome</keyword>
<comment type="function">
    <text evidence="1">Catalyzes the NAD(P)H-dependent reduction of 2-oxoglutarate, phenylpyruvate and (4-hydroxyphenyl)pyruvate, leading to the respective 2-hydroxycarboxylate in vitro. Shows a preference for NADPH over NADH as a redox partner. Do not catalyze the reverse reactions.</text>
</comment>
<comment type="catalytic activity">
    <reaction evidence="1">
        <text>2-hydroxyglutarate + NADP(+) = 2-oxoglutarate + NADPH + H(+)</text>
        <dbReference type="Rhea" id="RHEA:52308"/>
        <dbReference type="ChEBI" id="CHEBI:11596"/>
        <dbReference type="ChEBI" id="CHEBI:15378"/>
        <dbReference type="ChEBI" id="CHEBI:16810"/>
        <dbReference type="ChEBI" id="CHEBI:57783"/>
        <dbReference type="ChEBI" id="CHEBI:58349"/>
    </reaction>
</comment>
<comment type="catalytic activity">
    <reaction evidence="1">
        <text>2-hydroxyglutarate + NAD(+) = 2-oxoglutarate + NADH + H(+)</text>
        <dbReference type="Rhea" id="RHEA:13449"/>
        <dbReference type="ChEBI" id="CHEBI:11596"/>
        <dbReference type="ChEBI" id="CHEBI:15378"/>
        <dbReference type="ChEBI" id="CHEBI:16810"/>
        <dbReference type="ChEBI" id="CHEBI:57540"/>
        <dbReference type="ChEBI" id="CHEBI:57945"/>
    </reaction>
</comment>
<comment type="catalytic activity">
    <reaction evidence="1">
        <text>3-phenyllactate + NADP(+) = 3-phenylpyruvate + NADPH + H(+)</text>
        <dbReference type="Rhea" id="RHEA:52692"/>
        <dbReference type="ChEBI" id="CHEBI:8100"/>
        <dbReference type="ChEBI" id="CHEBI:15378"/>
        <dbReference type="ChEBI" id="CHEBI:18005"/>
        <dbReference type="ChEBI" id="CHEBI:57783"/>
        <dbReference type="ChEBI" id="CHEBI:58349"/>
    </reaction>
</comment>
<comment type="catalytic activity">
    <reaction evidence="1">
        <text>3-phenyllactate + NAD(+) = 3-phenylpyruvate + NADH + H(+)</text>
        <dbReference type="Rhea" id="RHEA:52688"/>
        <dbReference type="ChEBI" id="CHEBI:8100"/>
        <dbReference type="ChEBI" id="CHEBI:15378"/>
        <dbReference type="ChEBI" id="CHEBI:18005"/>
        <dbReference type="ChEBI" id="CHEBI:57540"/>
        <dbReference type="ChEBI" id="CHEBI:57945"/>
    </reaction>
</comment>
<comment type="catalytic activity">
    <reaction evidence="1">
        <text>(2R)-2-hydroxy-3-(4-hydroxyphenyl)propanoate + NAD(+) = 3-(4-hydroxyphenyl)pyruvate + NADH + H(+)</text>
        <dbReference type="Rhea" id="RHEA:10780"/>
        <dbReference type="ChEBI" id="CHEBI:10980"/>
        <dbReference type="ChEBI" id="CHEBI:15378"/>
        <dbReference type="ChEBI" id="CHEBI:36242"/>
        <dbReference type="ChEBI" id="CHEBI:57540"/>
        <dbReference type="ChEBI" id="CHEBI:57945"/>
        <dbReference type="EC" id="1.1.1.237"/>
    </reaction>
</comment>
<comment type="catalytic activity">
    <reaction evidence="1">
        <text>(2R)-2-hydroxy-3-(4-hydroxyphenyl)propanoate + NADP(+) = 3-(4-hydroxyphenyl)pyruvate + NADPH + H(+)</text>
        <dbReference type="Rhea" id="RHEA:10776"/>
        <dbReference type="ChEBI" id="CHEBI:10980"/>
        <dbReference type="ChEBI" id="CHEBI:15378"/>
        <dbReference type="ChEBI" id="CHEBI:36242"/>
        <dbReference type="ChEBI" id="CHEBI:57783"/>
        <dbReference type="ChEBI" id="CHEBI:58349"/>
        <dbReference type="EC" id="1.1.1.237"/>
    </reaction>
</comment>
<comment type="catalytic activity">
    <reaction evidence="1">
        <text>(2R)-3-(3,4-dihydroxyphenyl)lactate + NADP(+) = 3-(3,4-dihydroxyphenyl)pyruvate + NADPH + H(+)</text>
        <dbReference type="Rhea" id="RHEA:57704"/>
        <dbReference type="ChEBI" id="CHEBI:15378"/>
        <dbReference type="ChEBI" id="CHEBI:29055"/>
        <dbReference type="ChEBI" id="CHEBI:57783"/>
        <dbReference type="ChEBI" id="CHEBI:58349"/>
        <dbReference type="ChEBI" id="CHEBI:71492"/>
        <dbReference type="EC" id="1.1.1.237"/>
    </reaction>
</comment>
<comment type="catalytic activity">
    <reaction evidence="1">
        <text>(2R)-3-(3,4-dihydroxyphenyl)lactate + NAD(+) = 3-(3,4-dihydroxyphenyl)pyruvate + NADH + H(+)</text>
        <dbReference type="Rhea" id="RHEA:57408"/>
        <dbReference type="ChEBI" id="CHEBI:15378"/>
        <dbReference type="ChEBI" id="CHEBI:29055"/>
        <dbReference type="ChEBI" id="CHEBI:57540"/>
        <dbReference type="ChEBI" id="CHEBI:57945"/>
        <dbReference type="ChEBI" id="CHEBI:71492"/>
        <dbReference type="EC" id="1.1.1.237"/>
    </reaction>
</comment>
<comment type="similarity">
    <text evidence="2">Belongs to the LDH2/MDH2 oxidoreductase family.</text>
</comment>
<accession>P58409</accession>
<protein>
    <recommendedName>
        <fullName evidence="1">Hydroxycarboxylate dehydrogenase B</fullName>
        <ecNumber evidence="1">1.1.1.-</ecNumber>
    </recommendedName>
    <alternativeName>
        <fullName evidence="1">2-oxoglutarate reductase</fullName>
    </alternativeName>
    <alternativeName>
        <fullName evidence="1">Hydroxyphenylpyruvate reductase</fullName>
        <ecNumber evidence="1">1.1.1.237</ecNumber>
    </alternativeName>
    <alternativeName>
        <fullName evidence="1">Phenylpyruvate reductase</fullName>
    </alternativeName>
</protein>